<evidence type="ECO:0000255" key="1">
    <source>
        <dbReference type="HAMAP-Rule" id="MF_00063"/>
    </source>
</evidence>
<evidence type="ECO:0000303" key="2">
    <source>
    </source>
</evidence>
<evidence type="ECO:0000305" key="3"/>
<feature type="chain" id="PRO_0000424294" description="Adenosine 5'-phosphosulfate reductase">
    <location>
        <begin position="1"/>
        <end position="250"/>
    </location>
</feature>
<feature type="active site" description="Nucleophile; cysteine thiosulfonate intermediate" evidence="1">
    <location>
        <position position="230"/>
    </location>
</feature>
<feature type="binding site" evidence="1">
    <location>
        <position position="119"/>
    </location>
    <ligand>
        <name>[4Fe-4S] cluster</name>
        <dbReference type="ChEBI" id="CHEBI:49883"/>
    </ligand>
</feature>
<feature type="binding site" evidence="1">
    <location>
        <position position="120"/>
    </location>
    <ligand>
        <name>[4Fe-4S] cluster</name>
        <dbReference type="ChEBI" id="CHEBI:49883"/>
    </ligand>
</feature>
<feature type="binding site" evidence="1">
    <location>
        <position position="202"/>
    </location>
    <ligand>
        <name>[4Fe-4S] cluster</name>
        <dbReference type="ChEBI" id="CHEBI:49883"/>
    </ligand>
</feature>
<feature type="binding site" evidence="1">
    <location>
        <position position="205"/>
    </location>
    <ligand>
        <name>[4Fe-4S] cluster</name>
        <dbReference type="ChEBI" id="CHEBI:49883"/>
    </ligand>
</feature>
<keyword id="KW-0963">Cytoplasm</keyword>
<keyword id="KW-0408">Iron</keyword>
<keyword id="KW-0411">Iron-sulfur</keyword>
<keyword id="KW-0479">Metal-binding</keyword>
<keyword id="KW-0560">Oxidoreductase</keyword>
<accession>Q9RFS6</accession>
<name>CYSH_BURCE</name>
<comment type="function">
    <text evidence="1">Catalyzes the formation of sulfite from adenosine 5'-phosphosulfate (APS) using thioredoxin as an electron donor.</text>
</comment>
<comment type="catalytic activity">
    <reaction evidence="1">
        <text>[thioredoxin]-disulfide + sulfite + AMP + 2 H(+) = adenosine 5'-phosphosulfate + [thioredoxin]-dithiol</text>
        <dbReference type="Rhea" id="RHEA:21976"/>
        <dbReference type="Rhea" id="RHEA-COMP:10698"/>
        <dbReference type="Rhea" id="RHEA-COMP:10700"/>
        <dbReference type="ChEBI" id="CHEBI:15378"/>
        <dbReference type="ChEBI" id="CHEBI:17359"/>
        <dbReference type="ChEBI" id="CHEBI:29950"/>
        <dbReference type="ChEBI" id="CHEBI:50058"/>
        <dbReference type="ChEBI" id="CHEBI:58243"/>
        <dbReference type="ChEBI" id="CHEBI:456215"/>
        <dbReference type="EC" id="1.8.4.10"/>
    </reaction>
</comment>
<comment type="cofactor">
    <cofactor evidence="1">
        <name>[4Fe-4S] cluster</name>
        <dbReference type="ChEBI" id="CHEBI:49883"/>
    </cofactor>
    <text evidence="1">Binds 1 [4Fe-4S] cluster per subunit.</text>
</comment>
<comment type="pathway">
    <text evidence="1">Sulfur metabolism; hydrogen sulfide biosynthesis; sulfite from sulfate.</text>
</comment>
<comment type="subcellular location">
    <subcellularLocation>
        <location evidence="1">Cytoplasm</location>
    </subcellularLocation>
</comment>
<comment type="similarity">
    <text evidence="1 3">Belongs to the PAPS reductase family. CysH subfamily.</text>
</comment>
<gene>
    <name evidence="1 2" type="primary">cysH</name>
</gene>
<reference key="1">
    <citation type="journal article" date="2000" name="J. Bacteriol.">
        <title>Identification of a new class of 5'-adenylylsulfate (APS) reductases from sulfate-assimilating bacteria.</title>
        <authorList>
            <person name="Bick J.A."/>
            <person name="Dennis J.J."/>
            <person name="Zylstra G.J."/>
            <person name="Nowack J."/>
            <person name="Leustek T."/>
        </authorList>
    </citation>
    <scope>NUCLEOTIDE SEQUENCE [GENOMIC DNA]</scope>
    <source>
        <strain>ATCC 29424 / DBO1</strain>
    </source>
</reference>
<protein>
    <recommendedName>
        <fullName evidence="1">Adenosine 5'-phosphosulfate reductase</fullName>
        <shortName evidence="1 2">APS reductase</shortName>
        <ecNumber evidence="1">1.8.4.10</ecNumber>
    </recommendedName>
    <alternativeName>
        <fullName evidence="1 2">5'-adenylylsulfate reductase</fullName>
    </alternativeName>
    <alternativeName>
        <fullName evidence="1 3">Thioredoxin-dependent 5'-adenylylsulfate reductase</fullName>
    </alternativeName>
</protein>
<organism>
    <name type="scientific">Burkholderia cepacia</name>
    <name type="common">Pseudomonas cepacia</name>
    <dbReference type="NCBI Taxonomy" id="292"/>
    <lineage>
        <taxon>Bacteria</taxon>
        <taxon>Pseudomonadati</taxon>
        <taxon>Pseudomonadota</taxon>
        <taxon>Betaproteobacteria</taxon>
        <taxon>Burkholderiales</taxon>
        <taxon>Burkholderiaceae</taxon>
        <taxon>Burkholderia</taxon>
        <taxon>Burkholderia cepacia complex</taxon>
    </lineage>
</organism>
<proteinExistence type="inferred from homology"/>
<dbReference type="EC" id="1.8.4.10" evidence="1"/>
<dbReference type="EMBL" id="AF170343">
    <property type="protein sequence ID" value="AAD50979.1"/>
    <property type="molecule type" value="Genomic_DNA"/>
</dbReference>
<dbReference type="SMR" id="Q9RFS6"/>
<dbReference type="STRING" id="292.WI67_13350"/>
<dbReference type="KEGG" id="ag:AAD50979"/>
<dbReference type="KEGG" id="bced:DM42_2595"/>
<dbReference type="eggNOG" id="COG0175">
    <property type="taxonomic scope" value="Bacteria"/>
</dbReference>
<dbReference type="BRENDA" id="1.8.4.10">
    <property type="organism ID" value="1028"/>
</dbReference>
<dbReference type="GO" id="GO:0005737">
    <property type="term" value="C:cytoplasm"/>
    <property type="evidence" value="ECO:0007669"/>
    <property type="project" value="UniProtKB-SubCell"/>
</dbReference>
<dbReference type="GO" id="GO:0051539">
    <property type="term" value="F:4 iron, 4 sulfur cluster binding"/>
    <property type="evidence" value="ECO:0007669"/>
    <property type="project" value="UniProtKB-UniRule"/>
</dbReference>
<dbReference type="GO" id="GO:0043866">
    <property type="term" value="F:adenylyl-sulfate reductase (thioredoxin) activity"/>
    <property type="evidence" value="ECO:0007669"/>
    <property type="project" value="UniProtKB-EC"/>
</dbReference>
<dbReference type="GO" id="GO:0046872">
    <property type="term" value="F:metal ion binding"/>
    <property type="evidence" value="ECO:0007669"/>
    <property type="project" value="UniProtKB-KW"/>
</dbReference>
<dbReference type="GO" id="GO:0004604">
    <property type="term" value="F:phosphoadenylyl-sulfate reductase (thioredoxin) activity"/>
    <property type="evidence" value="ECO:0007669"/>
    <property type="project" value="UniProtKB-UniRule"/>
</dbReference>
<dbReference type="GO" id="GO:0019344">
    <property type="term" value="P:cysteine biosynthetic process"/>
    <property type="evidence" value="ECO:0007669"/>
    <property type="project" value="InterPro"/>
</dbReference>
<dbReference type="GO" id="GO:0070814">
    <property type="term" value="P:hydrogen sulfide biosynthetic process"/>
    <property type="evidence" value="ECO:0007669"/>
    <property type="project" value="UniProtKB-UniRule"/>
</dbReference>
<dbReference type="GO" id="GO:0019379">
    <property type="term" value="P:sulfate assimilation, phosphoadenylyl sulfate reduction by phosphoadenylyl-sulfate reductase (thioredoxin)"/>
    <property type="evidence" value="ECO:0007669"/>
    <property type="project" value="UniProtKB-UniRule"/>
</dbReference>
<dbReference type="CDD" id="cd23945">
    <property type="entry name" value="PAPS_reductase"/>
    <property type="match status" value="1"/>
</dbReference>
<dbReference type="Gene3D" id="3.40.50.620">
    <property type="entry name" value="HUPs"/>
    <property type="match status" value="1"/>
</dbReference>
<dbReference type="HAMAP" id="MF_00063">
    <property type="entry name" value="CysH"/>
    <property type="match status" value="1"/>
</dbReference>
<dbReference type="InterPro" id="IPR011798">
    <property type="entry name" value="APS_reductase"/>
</dbReference>
<dbReference type="InterPro" id="IPR004511">
    <property type="entry name" value="PAPS/APS_Rdtase"/>
</dbReference>
<dbReference type="InterPro" id="IPR002500">
    <property type="entry name" value="PAPS_reduct_dom"/>
</dbReference>
<dbReference type="InterPro" id="IPR014729">
    <property type="entry name" value="Rossmann-like_a/b/a_fold"/>
</dbReference>
<dbReference type="NCBIfam" id="TIGR02055">
    <property type="entry name" value="APS_reductase"/>
    <property type="match status" value="1"/>
</dbReference>
<dbReference type="NCBIfam" id="NF002537">
    <property type="entry name" value="PRK02090.1"/>
    <property type="match status" value="1"/>
</dbReference>
<dbReference type="PANTHER" id="PTHR46482:SF9">
    <property type="entry name" value="5'-ADENYLYLSULFATE REDUCTASE 1, CHLOROPLASTIC"/>
    <property type="match status" value="1"/>
</dbReference>
<dbReference type="PANTHER" id="PTHR46482">
    <property type="entry name" value="5'-ADENYLYLSULFATE REDUCTASE 3, CHLOROPLASTIC"/>
    <property type="match status" value="1"/>
</dbReference>
<dbReference type="Pfam" id="PF01507">
    <property type="entry name" value="PAPS_reduct"/>
    <property type="match status" value="1"/>
</dbReference>
<dbReference type="PIRSF" id="PIRSF000857">
    <property type="entry name" value="PAPS_reductase"/>
    <property type="match status" value="1"/>
</dbReference>
<dbReference type="SUPFAM" id="SSF52402">
    <property type="entry name" value="Adenine nucleotide alpha hydrolases-like"/>
    <property type="match status" value="1"/>
</dbReference>
<sequence length="250" mass="27881">MSTATATALTPELAAKVERLDALLAQIGERHDKVKFASSLAAEDMLLTHAILSKGVPIGIFSLNTGRLHAETLGMIDRVRERYGYEIEQFHPQQDAVDRYVAEHGLNAFYESVELRKSCCHIRKVEPLNRALADVGAWVTGQRREQSVTRAELHEEEQDEARGIAKYNPLADWTEADVWAYLKAFDVPVNPLHARGYPSIGCEPCTRAIRPGEDSRAGRWWWESRDTKECGLHITTITPIPANAEAGAAH</sequence>